<keyword id="KW-0687">Ribonucleoprotein</keyword>
<keyword id="KW-0689">Ribosomal protein</keyword>
<protein>
    <recommendedName>
        <fullName evidence="1">Large ribosomal subunit protein bL33</fullName>
    </recommendedName>
    <alternativeName>
        <fullName evidence="2">50S ribosomal protein L33</fullName>
    </alternativeName>
</protein>
<dbReference type="EMBL" id="CP000720">
    <property type="protein sequence ID" value="ABS46824.1"/>
    <property type="molecule type" value="Genomic_DNA"/>
</dbReference>
<dbReference type="RefSeq" id="WP_002208990.1">
    <property type="nucleotide sequence ID" value="NC_009708.1"/>
</dbReference>
<dbReference type="SMR" id="A7FCT6"/>
<dbReference type="GeneID" id="96663532"/>
<dbReference type="KEGG" id="ypi:YpsIP31758_0063"/>
<dbReference type="HOGENOM" id="CLU_190949_1_1_6"/>
<dbReference type="Proteomes" id="UP000002412">
    <property type="component" value="Chromosome"/>
</dbReference>
<dbReference type="GO" id="GO:0022625">
    <property type="term" value="C:cytosolic large ribosomal subunit"/>
    <property type="evidence" value="ECO:0007669"/>
    <property type="project" value="TreeGrafter"/>
</dbReference>
<dbReference type="GO" id="GO:0003735">
    <property type="term" value="F:structural constituent of ribosome"/>
    <property type="evidence" value="ECO:0007669"/>
    <property type="project" value="InterPro"/>
</dbReference>
<dbReference type="GO" id="GO:0006412">
    <property type="term" value="P:translation"/>
    <property type="evidence" value="ECO:0007669"/>
    <property type="project" value="UniProtKB-UniRule"/>
</dbReference>
<dbReference type="FunFam" id="2.20.28.120:FF:000001">
    <property type="entry name" value="50S ribosomal protein L33"/>
    <property type="match status" value="1"/>
</dbReference>
<dbReference type="Gene3D" id="2.20.28.120">
    <property type="entry name" value="Ribosomal protein L33"/>
    <property type="match status" value="1"/>
</dbReference>
<dbReference type="HAMAP" id="MF_00294">
    <property type="entry name" value="Ribosomal_bL33"/>
    <property type="match status" value="1"/>
</dbReference>
<dbReference type="InterPro" id="IPR001705">
    <property type="entry name" value="Ribosomal_bL33"/>
</dbReference>
<dbReference type="InterPro" id="IPR018264">
    <property type="entry name" value="Ribosomal_bL33_CS"/>
</dbReference>
<dbReference type="InterPro" id="IPR038584">
    <property type="entry name" value="Ribosomal_bL33_sf"/>
</dbReference>
<dbReference type="InterPro" id="IPR011332">
    <property type="entry name" value="Ribosomal_zn-bd"/>
</dbReference>
<dbReference type="NCBIfam" id="NF001860">
    <property type="entry name" value="PRK00595.1"/>
    <property type="match status" value="1"/>
</dbReference>
<dbReference type="NCBIfam" id="TIGR01023">
    <property type="entry name" value="rpmG_bact"/>
    <property type="match status" value="1"/>
</dbReference>
<dbReference type="PANTHER" id="PTHR15238">
    <property type="entry name" value="54S RIBOSOMAL PROTEIN L39, MITOCHONDRIAL"/>
    <property type="match status" value="1"/>
</dbReference>
<dbReference type="PANTHER" id="PTHR15238:SF1">
    <property type="entry name" value="LARGE RIBOSOMAL SUBUNIT PROTEIN BL33M"/>
    <property type="match status" value="1"/>
</dbReference>
<dbReference type="Pfam" id="PF00471">
    <property type="entry name" value="Ribosomal_L33"/>
    <property type="match status" value="1"/>
</dbReference>
<dbReference type="SUPFAM" id="SSF57829">
    <property type="entry name" value="Zn-binding ribosomal proteins"/>
    <property type="match status" value="1"/>
</dbReference>
<dbReference type="PROSITE" id="PS00582">
    <property type="entry name" value="RIBOSOMAL_L33"/>
    <property type="match status" value="1"/>
</dbReference>
<feature type="chain" id="PRO_1000059287" description="Large ribosomal subunit protein bL33">
    <location>
        <begin position="1"/>
        <end position="55"/>
    </location>
</feature>
<sequence>MAKGVREKIKLVSSAGTGHFYTTTKNKRTKPEKLELKKFDPVVRQHVLYKEAKIK</sequence>
<comment type="similarity">
    <text evidence="1">Belongs to the bacterial ribosomal protein bL33 family.</text>
</comment>
<gene>
    <name evidence="1" type="primary">rpmG</name>
    <name type="ordered locus">YpsIP31758_0063</name>
</gene>
<evidence type="ECO:0000255" key="1">
    <source>
        <dbReference type="HAMAP-Rule" id="MF_00294"/>
    </source>
</evidence>
<evidence type="ECO:0000305" key="2"/>
<name>RL33_YERP3</name>
<proteinExistence type="inferred from homology"/>
<accession>A7FCT6</accession>
<organism>
    <name type="scientific">Yersinia pseudotuberculosis serotype O:1b (strain IP 31758)</name>
    <dbReference type="NCBI Taxonomy" id="349747"/>
    <lineage>
        <taxon>Bacteria</taxon>
        <taxon>Pseudomonadati</taxon>
        <taxon>Pseudomonadota</taxon>
        <taxon>Gammaproteobacteria</taxon>
        <taxon>Enterobacterales</taxon>
        <taxon>Yersiniaceae</taxon>
        <taxon>Yersinia</taxon>
    </lineage>
</organism>
<reference key="1">
    <citation type="journal article" date="2007" name="PLoS Genet.">
        <title>The complete genome sequence of Yersinia pseudotuberculosis IP31758, the causative agent of Far East scarlet-like fever.</title>
        <authorList>
            <person name="Eppinger M."/>
            <person name="Rosovitz M.J."/>
            <person name="Fricke W.F."/>
            <person name="Rasko D.A."/>
            <person name="Kokorina G."/>
            <person name="Fayolle C."/>
            <person name="Lindler L.E."/>
            <person name="Carniel E."/>
            <person name="Ravel J."/>
        </authorList>
    </citation>
    <scope>NUCLEOTIDE SEQUENCE [LARGE SCALE GENOMIC DNA]</scope>
    <source>
        <strain>IP 31758</strain>
    </source>
</reference>